<sequence>MERAEKREFVASLNQVFQNTGSVVVATYAGLTVAQMNDLRSKMRAAGGSVKVAKNRLAKIALQGTPSEGIQALFQGQTLIAYSDDPVAAPKIASEFAKGNDNLVILGGAMGATALDAEGVKALASLPSLDELRAKIVGMIQTPATRIAQIVNAPAGQLARVVGAYARKDEAA</sequence>
<keyword id="KW-0687">Ribonucleoprotein</keyword>
<keyword id="KW-0689">Ribosomal protein</keyword>
<keyword id="KW-0694">RNA-binding</keyword>
<keyword id="KW-0699">rRNA-binding</keyword>
<evidence type="ECO:0000255" key="1">
    <source>
        <dbReference type="HAMAP-Rule" id="MF_00362"/>
    </source>
</evidence>
<evidence type="ECO:0000305" key="2"/>
<organism>
    <name type="scientific">Chelativorans sp. (strain BNC1)</name>
    <dbReference type="NCBI Taxonomy" id="266779"/>
    <lineage>
        <taxon>Bacteria</taxon>
        <taxon>Pseudomonadati</taxon>
        <taxon>Pseudomonadota</taxon>
        <taxon>Alphaproteobacteria</taxon>
        <taxon>Hyphomicrobiales</taxon>
        <taxon>Phyllobacteriaceae</taxon>
        <taxon>Chelativorans</taxon>
    </lineage>
</organism>
<proteinExistence type="inferred from homology"/>
<protein>
    <recommendedName>
        <fullName evidence="1">Large ribosomal subunit protein uL10</fullName>
    </recommendedName>
    <alternativeName>
        <fullName evidence="2">50S ribosomal protein L10</fullName>
    </alternativeName>
</protein>
<dbReference type="EMBL" id="CP000390">
    <property type="protein sequence ID" value="ABG63214.1"/>
    <property type="molecule type" value="Genomic_DNA"/>
</dbReference>
<dbReference type="SMR" id="Q11HB1"/>
<dbReference type="STRING" id="266779.Meso_1821"/>
<dbReference type="KEGG" id="mes:Meso_1821"/>
<dbReference type="eggNOG" id="COG0244">
    <property type="taxonomic scope" value="Bacteria"/>
</dbReference>
<dbReference type="HOGENOM" id="CLU_092227_0_0_5"/>
<dbReference type="OrthoDB" id="9791972at2"/>
<dbReference type="GO" id="GO:1990904">
    <property type="term" value="C:ribonucleoprotein complex"/>
    <property type="evidence" value="ECO:0007669"/>
    <property type="project" value="UniProtKB-KW"/>
</dbReference>
<dbReference type="GO" id="GO:0005840">
    <property type="term" value="C:ribosome"/>
    <property type="evidence" value="ECO:0007669"/>
    <property type="project" value="UniProtKB-KW"/>
</dbReference>
<dbReference type="GO" id="GO:0070180">
    <property type="term" value="F:large ribosomal subunit rRNA binding"/>
    <property type="evidence" value="ECO:0007669"/>
    <property type="project" value="UniProtKB-UniRule"/>
</dbReference>
<dbReference type="GO" id="GO:0006412">
    <property type="term" value="P:translation"/>
    <property type="evidence" value="ECO:0007669"/>
    <property type="project" value="UniProtKB-UniRule"/>
</dbReference>
<dbReference type="CDD" id="cd05797">
    <property type="entry name" value="Ribosomal_L10"/>
    <property type="match status" value="1"/>
</dbReference>
<dbReference type="Gene3D" id="3.30.70.1730">
    <property type="match status" value="1"/>
</dbReference>
<dbReference type="Gene3D" id="6.10.250.290">
    <property type="match status" value="1"/>
</dbReference>
<dbReference type="HAMAP" id="MF_00362">
    <property type="entry name" value="Ribosomal_uL10"/>
    <property type="match status" value="1"/>
</dbReference>
<dbReference type="InterPro" id="IPR001790">
    <property type="entry name" value="Ribosomal_uL10"/>
</dbReference>
<dbReference type="InterPro" id="IPR043141">
    <property type="entry name" value="Ribosomal_uL10-like_sf"/>
</dbReference>
<dbReference type="InterPro" id="IPR022973">
    <property type="entry name" value="Ribosomal_uL10_bac"/>
</dbReference>
<dbReference type="InterPro" id="IPR047865">
    <property type="entry name" value="Ribosomal_uL10_bac_type"/>
</dbReference>
<dbReference type="NCBIfam" id="NF000955">
    <property type="entry name" value="PRK00099.1-1"/>
    <property type="match status" value="1"/>
</dbReference>
<dbReference type="PANTHER" id="PTHR11560">
    <property type="entry name" value="39S RIBOSOMAL PROTEIN L10, MITOCHONDRIAL"/>
    <property type="match status" value="1"/>
</dbReference>
<dbReference type="Pfam" id="PF00466">
    <property type="entry name" value="Ribosomal_L10"/>
    <property type="match status" value="1"/>
</dbReference>
<dbReference type="SUPFAM" id="SSF160369">
    <property type="entry name" value="Ribosomal protein L10-like"/>
    <property type="match status" value="1"/>
</dbReference>
<feature type="chain" id="PRO_1000005531" description="Large ribosomal subunit protein uL10">
    <location>
        <begin position="1"/>
        <end position="172"/>
    </location>
</feature>
<gene>
    <name evidence="1" type="primary">rplJ</name>
    <name type="ordered locus">Meso_1821</name>
</gene>
<reference key="1">
    <citation type="submission" date="2006-06" db="EMBL/GenBank/DDBJ databases">
        <title>Complete sequence of chromosome of Mesorhizobium sp. BNC1.</title>
        <authorList>
            <consortium name="US DOE Joint Genome Institute"/>
            <person name="Copeland A."/>
            <person name="Lucas S."/>
            <person name="Lapidus A."/>
            <person name="Barry K."/>
            <person name="Detter J.C."/>
            <person name="Glavina del Rio T."/>
            <person name="Hammon N."/>
            <person name="Israni S."/>
            <person name="Dalin E."/>
            <person name="Tice H."/>
            <person name="Pitluck S."/>
            <person name="Chertkov O."/>
            <person name="Brettin T."/>
            <person name="Bruce D."/>
            <person name="Han C."/>
            <person name="Tapia R."/>
            <person name="Gilna P."/>
            <person name="Schmutz J."/>
            <person name="Larimer F."/>
            <person name="Land M."/>
            <person name="Hauser L."/>
            <person name="Kyrpides N."/>
            <person name="Mikhailova N."/>
            <person name="Richardson P."/>
        </authorList>
    </citation>
    <scope>NUCLEOTIDE SEQUENCE [LARGE SCALE GENOMIC DNA]</scope>
    <source>
        <strain>BNC1</strain>
    </source>
</reference>
<comment type="function">
    <text evidence="1">Forms part of the ribosomal stalk, playing a central role in the interaction of the ribosome with GTP-bound translation factors.</text>
</comment>
<comment type="subunit">
    <text evidence="1">Part of the ribosomal stalk of the 50S ribosomal subunit. The N-terminus interacts with L11 and the large rRNA to form the base of the stalk. The C-terminus forms an elongated spine to which L12 dimers bind in a sequential fashion forming a multimeric L10(L12)X complex.</text>
</comment>
<comment type="similarity">
    <text evidence="1">Belongs to the universal ribosomal protein uL10 family.</text>
</comment>
<accession>Q11HB1</accession>
<name>RL10_CHESB</name>